<comment type="function">
    <text evidence="1">Murein-degrading enzyme. May play a role in recycling of muropeptides during cell elongation and/or cell division. Preferentially cleaves at a distance of more than two disaccharide units from the ends of the glycan chain.</text>
</comment>
<comment type="catalytic activity">
    <reaction evidence="1">
        <text>Endolytic cleavage of the (1-&gt;4)-beta-glycosidic linkage between N-acetylmuramic acid (MurNAc) and N-acetylglucosamine (GlcNAc) residues in peptidoglycan with concomitant formation of a 1,6-anhydrobond in the MurNAc residue.</text>
        <dbReference type="EC" id="4.2.2.n2"/>
    </reaction>
</comment>
<comment type="subcellular location">
    <subcellularLocation>
        <location evidence="1">Cell outer membrane</location>
        <topology evidence="1">Lipid-anchor</topology>
    </subcellularLocation>
</comment>
<comment type="similarity">
    <text evidence="1">Belongs to the transglycosylase Slt family.</text>
</comment>
<name>EMTA_SALPB</name>
<organism>
    <name type="scientific">Salmonella paratyphi B (strain ATCC BAA-1250 / SPB7)</name>
    <dbReference type="NCBI Taxonomy" id="1016998"/>
    <lineage>
        <taxon>Bacteria</taxon>
        <taxon>Pseudomonadati</taxon>
        <taxon>Pseudomonadota</taxon>
        <taxon>Gammaproteobacteria</taxon>
        <taxon>Enterobacterales</taxon>
        <taxon>Enterobacteriaceae</taxon>
        <taxon>Salmonella</taxon>
    </lineage>
</organism>
<accession>A9MVX1</accession>
<keyword id="KW-0998">Cell outer membrane</keyword>
<keyword id="KW-0961">Cell wall biogenesis/degradation</keyword>
<keyword id="KW-0449">Lipoprotein</keyword>
<keyword id="KW-0456">Lyase</keyword>
<keyword id="KW-0472">Membrane</keyword>
<keyword id="KW-0564">Palmitate</keyword>
<keyword id="KW-0732">Signal</keyword>
<gene>
    <name evidence="1" type="primary">emtA</name>
    <name type="ordered locus">SPAB_01420</name>
</gene>
<proteinExistence type="inferred from homology"/>
<feature type="signal peptide" evidence="1">
    <location>
        <begin position="1"/>
        <end position="15"/>
    </location>
</feature>
<feature type="chain" id="PRO_1000087304" description="Endo-type membrane-bound lytic murein transglycosylase A">
    <location>
        <begin position="16"/>
        <end position="203"/>
    </location>
</feature>
<feature type="lipid moiety-binding region" description="N-palmitoyl cysteine" evidence="1">
    <location>
        <position position="16"/>
    </location>
</feature>
<feature type="lipid moiety-binding region" description="S-diacylglycerol cysteine" evidence="1">
    <location>
        <position position="16"/>
    </location>
</feature>
<protein>
    <recommendedName>
        <fullName evidence="1">Endo-type membrane-bound lytic murein transglycosylase A</fullName>
        <ecNumber evidence="1">4.2.2.n2</ecNumber>
    </recommendedName>
    <alternativeName>
        <fullName evidence="1">Peptidoglycan lytic endotransglycosylase</fullName>
    </alternativeName>
</protein>
<reference key="1">
    <citation type="submission" date="2007-11" db="EMBL/GenBank/DDBJ databases">
        <authorList>
            <consortium name="The Salmonella enterica serovar Paratyphi B Genome Sequencing Project"/>
            <person name="McClelland M."/>
            <person name="Sanderson E.K."/>
            <person name="Porwollik S."/>
            <person name="Spieth J."/>
            <person name="Clifton W.S."/>
            <person name="Fulton R."/>
            <person name="Cordes M."/>
            <person name="Wollam A."/>
            <person name="Shah N."/>
            <person name="Pepin K."/>
            <person name="Bhonagiri V."/>
            <person name="Nash W."/>
            <person name="Johnson M."/>
            <person name="Thiruvilangam P."/>
            <person name="Wilson R."/>
        </authorList>
    </citation>
    <scope>NUCLEOTIDE SEQUENCE [LARGE SCALE GENOMIC DNA]</scope>
    <source>
        <strain>ATCC BAA-1250 / SPB7</strain>
    </source>
</reference>
<sequence length="203" mass="22427">MKLRWFAFLVVILAGCSSKQDYRNPPWNAEVPVKRAMQWMPISEKAGAAWGVDPHLITAIIAIESGGNPNAVSKSNAIGLMQLKASTSGRDVYRRMGWRGEPTTSELKNPERNISMGAAYLSILENGPLAGIKDPQVMQYALVVSYANGAGALLRTFSSDRKKAIEKINDLDADEFFEHVVDNHPAPQAPRYIWKLQQALDAM</sequence>
<dbReference type="EC" id="4.2.2.n2" evidence="1"/>
<dbReference type="EMBL" id="CP000886">
    <property type="protein sequence ID" value="ABX66827.1"/>
    <property type="molecule type" value="Genomic_DNA"/>
</dbReference>
<dbReference type="RefSeq" id="WP_000776974.1">
    <property type="nucleotide sequence ID" value="NC_010102.1"/>
</dbReference>
<dbReference type="SMR" id="A9MVX1"/>
<dbReference type="CAZy" id="GH23">
    <property type="family name" value="Glycoside Hydrolase Family 23"/>
</dbReference>
<dbReference type="KEGG" id="spq:SPAB_01420"/>
<dbReference type="PATRIC" id="fig|1016998.12.peg.1339"/>
<dbReference type="HOGENOM" id="CLU_103257_0_0_6"/>
<dbReference type="BioCyc" id="SENT1016998:SPAB_RS05815-MONOMER"/>
<dbReference type="Proteomes" id="UP000008556">
    <property type="component" value="Chromosome"/>
</dbReference>
<dbReference type="GO" id="GO:0009279">
    <property type="term" value="C:cell outer membrane"/>
    <property type="evidence" value="ECO:0007669"/>
    <property type="project" value="UniProtKB-SubCell"/>
</dbReference>
<dbReference type="GO" id="GO:0008932">
    <property type="term" value="F:lytic endotransglycosylase activity"/>
    <property type="evidence" value="ECO:0007669"/>
    <property type="project" value="InterPro"/>
</dbReference>
<dbReference type="GO" id="GO:0016998">
    <property type="term" value="P:cell wall macromolecule catabolic process"/>
    <property type="evidence" value="ECO:0007669"/>
    <property type="project" value="UniProtKB-UniRule"/>
</dbReference>
<dbReference type="GO" id="GO:0071555">
    <property type="term" value="P:cell wall organization"/>
    <property type="evidence" value="ECO:0007669"/>
    <property type="project" value="UniProtKB-KW"/>
</dbReference>
<dbReference type="GO" id="GO:0000270">
    <property type="term" value="P:peptidoglycan metabolic process"/>
    <property type="evidence" value="ECO:0007669"/>
    <property type="project" value="InterPro"/>
</dbReference>
<dbReference type="CDD" id="cd16893">
    <property type="entry name" value="LT_MltC_MltE"/>
    <property type="match status" value="1"/>
</dbReference>
<dbReference type="Gene3D" id="1.10.530.10">
    <property type="match status" value="1"/>
</dbReference>
<dbReference type="HAMAP" id="MF_01381">
    <property type="entry name" value="EmtA"/>
    <property type="match status" value="1"/>
</dbReference>
<dbReference type="InterPro" id="IPR023946">
    <property type="entry name" value="EmtA"/>
</dbReference>
<dbReference type="InterPro" id="IPR023346">
    <property type="entry name" value="Lysozyme-like_dom_sf"/>
</dbReference>
<dbReference type="InterPro" id="IPR000189">
    <property type="entry name" value="Transglyc_AS"/>
</dbReference>
<dbReference type="InterPro" id="IPR008258">
    <property type="entry name" value="Transglycosylase_SLT_dom_1"/>
</dbReference>
<dbReference type="NCBIfam" id="NF012014">
    <property type="entry name" value="PRK15470.1"/>
    <property type="match status" value="1"/>
</dbReference>
<dbReference type="PANTHER" id="PTHR37423:SF4">
    <property type="entry name" value="ENDO-TYPE MEMBRANE-BOUND LYTIC MUREIN TRANSGLYCOSYLASE A"/>
    <property type="match status" value="1"/>
</dbReference>
<dbReference type="PANTHER" id="PTHR37423">
    <property type="entry name" value="SOLUBLE LYTIC MUREIN TRANSGLYCOSYLASE-RELATED"/>
    <property type="match status" value="1"/>
</dbReference>
<dbReference type="Pfam" id="PF01464">
    <property type="entry name" value="SLT"/>
    <property type="match status" value="1"/>
</dbReference>
<dbReference type="SUPFAM" id="SSF53955">
    <property type="entry name" value="Lysozyme-like"/>
    <property type="match status" value="1"/>
</dbReference>
<dbReference type="PROSITE" id="PS51257">
    <property type="entry name" value="PROKAR_LIPOPROTEIN"/>
    <property type="match status" value="1"/>
</dbReference>
<dbReference type="PROSITE" id="PS00922">
    <property type="entry name" value="TRANSGLYCOSYLASE"/>
    <property type="match status" value="1"/>
</dbReference>
<evidence type="ECO:0000255" key="1">
    <source>
        <dbReference type="HAMAP-Rule" id="MF_01381"/>
    </source>
</evidence>